<keyword id="KW-0963">Cytoplasm</keyword>
<keyword id="KW-0269">Exonuclease</keyword>
<keyword id="KW-0378">Hydrolase</keyword>
<keyword id="KW-0540">Nuclease</keyword>
<keyword id="KW-0539">Nucleus</keyword>
<keyword id="KW-1185">Reference proteome</keyword>
<keyword id="KW-0698">rRNA processing</keyword>
<reference key="1">
    <citation type="journal article" date="2004" name="Nature">
        <title>Genome evolution in yeasts.</title>
        <authorList>
            <person name="Dujon B."/>
            <person name="Sherman D."/>
            <person name="Fischer G."/>
            <person name="Durrens P."/>
            <person name="Casaregola S."/>
            <person name="Lafontaine I."/>
            <person name="de Montigny J."/>
            <person name="Marck C."/>
            <person name="Neuveglise C."/>
            <person name="Talla E."/>
            <person name="Goffard N."/>
            <person name="Frangeul L."/>
            <person name="Aigle M."/>
            <person name="Anthouard V."/>
            <person name="Babour A."/>
            <person name="Barbe V."/>
            <person name="Barnay S."/>
            <person name="Blanchin S."/>
            <person name="Beckerich J.-M."/>
            <person name="Beyne E."/>
            <person name="Bleykasten C."/>
            <person name="Boisrame A."/>
            <person name="Boyer J."/>
            <person name="Cattolico L."/>
            <person name="Confanioleri F."/>
            <person name="de Daruvar A."/>
            <person name="Despons L."/>
            <person name="Fabre E."/>
            <person name="Fairhead C."/>
            <person name="Ferry-Dumazet H."/>
            <person name="Groppi A."/>
            <person name="Hantraye F."/>
            <person name="Hennequin C."/>
            <person name="Jauniaux N."/>
            <person name="Joyet P."/>
            <person name="Kachouri R."/>
            <person name="Kerrest A."/>
            <person name="Koszul R."/>
            <person name="Lemaire M."/>
            <person name="Lesur I."/>
            <person name="Ma L."/>
            <person name="Muller H."/>
            <person name="Nicaud J.-M."/>
            <person name="Nikolski M."/>
            <person name="Oztas S."/>
            <person name="Ozier-Kalogeropoulos O."/>
            <person name="Pellenz S."/>
            <person name="Potier S."/>
            <person name="Richard G.-F."/>
            <person name="Straub M.-L."/>
            <person name="Suleau A."/>
            <person name="Swennen D."/>
            <person name="Tekaia F."/>
            <person name="Wesolowski-Louvel M."/>
            <person name="Westhof E."/>
            <person name="Wirth B."/>
            <person name="Zeniou-Meyer M."/>
            <person name="Zivanovic Y."/>
            <person name="Bolotin-Fukuhara M."/>
            <person name="Thierry A."/>
            <person name="Bouchier C."/>
            <person name="Caudron B."/>
            <person name="Scarpelli C."/>
            <person name="Gaillardin C."/>
            <person name="Weissenbach J."/>
            <person name="Wincker P."/>
            <person name="Souciet J.-L."/>
        </authorList>
    </citation>
    <scope>NUCLEOTIDE SEQUENCE [LARGE SCALE GENOMIC DNA]</scope>
    <source>
        <strain>ATCC 8585 / CBS 2359 / DSM 70799 / NBRC 1267 / NRRL Y-1140 / WM37</strain>
    </source>
</reference>
<dbReference type="EC" id="3.1.-.-"/>
<dbReference type="EMBL" id="CR382126">
    <property type="protein sequence ID" value="CAG98682.1"/>
    <property type="molecule type" value="Genomic_DNA"/>
</dbReference>
<dbReference type="RefSeq" id="XP_455974.1">
    <property type="nucleotide sequence ID" value="XM_455974.1"/>
</dbReference>
<dbReference type="SMR" id="Q6CJB5"/>
<dbReference type="FunCoup" id="Q6CJB5">
    <property type="interactions" value="104"/>
</dbReference>
<dbReference type="STRING" id="284590.Q6CJB5"/>
<dbReference type="PaxDb" id="284590-Q6CJB5"/>
<dbReference type="KEGG" id="kla:KLLA0_F19910g"/>
<dbReference type="eggNOG" id="KOG2248">
    <property type="taxonomic scope" value="Eukaryota"/>
</dbReference>
<dbReference type="HOGENOM" id="CLU_022453_5_4_1"/>
<dbReference type="InParanoid" id="Q6CJB5"/>
<dbReference type="OMA" id="IDCEMGF"/>
<dbReference type="Proteomes" id="UP000000598">
    <property type="component" value="Chromosome F"/>
</dbReference>
<dbReference type="GO" id="GO:0005737">
    <property type="term" value="C:cytoplasm"/>
    <property type="evidence" value="ECO:0007669"/>
    <property type="project" value="UniProtKB-SubCell"/>
</dbReference>
<dbReference type="GO" id="GO:0005634">
    <property type="term" value="C:nucleus"/>
    <property type="evidence" value="ECO:0007669"/>
    <property type="project" value="UniProtKB-SubCell"/>
</dbReference>
<dbReference type="GO" id="GO:0004527">
    <property type="term" value="F:exonuclease activity"/>
    <property type="evidence" value="ECO:0007669"/>
    <property type="project" value="UniProtKB-KW"/>
</dbReference>
<dbReference type="GO" id="GO:0003676">
    <property type="term" value="F:nucleic acid binding"/>
    <property type="evidence" value="ECO:0007669"/>
    <property type="project" value="InterPro"/>
</dbReference>
<dbReference type="GO" id="GO:0006364">
    <property type="term" value="P:rRNA processing"/>
    <property type="evidence" value="ECO:0007669"/>
    <property type="project" value="UniProtKB-KW"/>
</dbReference>
<dbReference type="CDD" id="cd06145">
    <property type="entry name" value="REX1_like"/>
    <property type="match status" value="1"/>
</dbReference>
<dbReference type="FunFam" id="3.30.420.10:FF:000031">
    <property type="entry name" value="RNA exonuclease 1"/>
    <property type="match status" value="1"/>
</dbReference>
<dbReference type="Gene3D" id="3.30.420.10">
    <property type="entry name" value="Ribonuclease H-like superfamily/Ribonuclease H"/>
    <property type="match status" value="1"/>
</dbReference>
<dbReference type="InterPro" id="IPR013520">
    <property type="entry name" value="Exonuclease_RNaseT/DNA_pol3"/>
</dbReference>
<dbReference type="InterPro" id="IPR034922">
    <property type="entry name" value="REX1-like_exo"/>
</dbReference>
<dbReference type="InterPro" id="IPR047021">
    <property type="entry name" value="REXO1/3/4-like"/>
</dbReference>
<dbReference type="InterPro" id="IPR012337">
    <property type="entry name" value="RNaseH-like_sf"/>
</dbReference>
<dbReference type="InterPro" id="IPR036397">
    <property type="entry name" value="RNaseH_sf"/>
</dbReference>
<dbReference type="PANTHER" id="PTHR12801:SF118">
    <property type="entry name" value="RNA EXONUCLEASE 3"/>
    <property type="match status" value="1"/>
</dbReference>
<dbReference type="PANTHER" id="PTHR12801">
    <property type="entry name" value="RNA EXONUCLEASE REXO1 / RECO3 FAMILY MEMBER-RELATED"/>
    <property type="match status" value="1"/>
</dbReference>
<dbReference type="SMART" id="SM00479">
    <property type="entry name" value="EXOIII"/>
    <property type="match status" value="1"/>
</dbReference>
<dbReference type="SUPFAM" id="SSF53098">
    <property type="entry name" value="Ribonuclease H-like"/>
    <property type="match status" value="1"/>
</dbReference>
<name>REXO3_KLULA</name>
<sequence>MYPTLNLAVCLKSSHLISSHRFCLKNSQSTEKHQKEINISVKERYTCNPSHRQKKNGWVREKNALREPLTASLKFTIHLNSIVFRYIPLYAIIMVGNPVLRPVDMKMQPAPYQDRVRVVQKIYTQLKRFQSSSPHIIKASTIWEHEVAKIAKTRQSYAFNASILLRDIVKYKGNLDKTGKPKNNSSSLIQRSHVLQKLRSLLLDEETLSRNGFFVKMYDTDPINESESDYVECYRCETKFDVTKIMEPTVCRYHLQRKVYNRETKKREFPCCGASLESYSDISAGCMKAKNHVYKWENFTKLSSVVPFKSLVDIKGEENVLALDCEMAFTSKGYEMIRITIVDFWSSEVVYDKVIKPLGEIIDLNSKFSGIHHIDDTAPTIHEAEKCYICPSMINQNSILIGHGLDNDLRVMRIVHDKVIDTAVLYPAGKYKSSLKNLSFEILSRRIQGGEHDSSEDAIAAMDVIKKKLSIPLDKKSW</sequence>
<feature type="chain" id="PRO_0000120934" description="RNA exonuclease 3">
    <location>
        <begin position="1"/>
        <end position="478"/>
    </location>
</feature>
<feature type="domain" description="Exonuclease">
    <location>
        <begin position="320"/>
        <end position="465"/>
    </location>
</feature>
<proteinExistence type="inferred from homology"/>
<accession>Q6CJB5</accession>
<protein>
    <recommendedName>
        <fullName>RNA exonuclease 3</fullName>
        <ecNumber>3.1.-.-</ecNumber>
    </recommendedName>
</protein>
<comment type="function">
    <text evidence="1">3' to 5' exoribonuclease required for proper 3' end maturation of MRP RNA and of the U5L snRNA.</text>
</comment>
<comment type="subcellular location">
    <subcellularLocation>
        <location evidence="1">Cytoplasm</location>
    </subcellularLocation>
    <subcellularLocation>
        <location evidence="1">Nucleus</location>
    </subcellularLocation>
</comment>
<comment type="similarity">
    <text evidence="2">Belongs to the REXO1/REXO3 family.</text>
</comment>
<evidence type="ECO:0000250" key="1"/>
<evidence type="ECO:0000305" key="2"/>
<gene>
    <name type="primary">REX3</name>
    <name type="ordered locus">KLLA0F19910g</name>
</gene>
<organism>
    <name type="scientific">Kluyveromyces lactis (strain ATCC 8585 / CBS 2359 / DSM 70799 / NBRC 1267 / NRRL Y-1140 / WM37)</name>
    <name type="common">Yeast</name>
    <name type="synonym">Candida sphaerica</name>
    <dbReference type="NCBI Taxonomy" id="284590"/>
    <lineage>
        <taxon>Eukaryota</taxon>
        <taxon>Fungi</taxon>
        <taxon>Dikarya</taxon>
        <taxon>Ascomycota</taxon>
        <taxon>Saccharomycotina</taxon>
        <taxon>Saccharomycetes</taxon>
        <taxon>Saccharomycetales</taxon>
        <taxon>Saccharomycetaceae</taxon>
        <taxon>Kluyveromyces</taxon>
    </lineage>
</organism>